<reference key="1">
    <citation type="journal article" date="2005" name="J. Bacteriol.">
        <title>Insights on evolution of virulence and resistance from the complete genome analysis of an early methicillin-resistant Staphylococcus aureus strain and a biofilm-producing methicillin-resistant Staphylococcus epidermidis strain.</title>
        <authorList>
            <person name="Gill S.R."/>
            <person name="Fouts D.E."/>
            <person name="Archer G.L."/>
            <person name="Mongodin E.F."/>
            <person name="DeBoy R.T."/>
            <person name="Ravel J."/>
            <person name="Paulsen I.T."/>
            <person name="Kolonay J.F."/>
            <person name="Brinkac L.M."/>
            <person name="Beanan M.J."/>
            <person name="Dodson R.J."/>
            <person name="Daugherty S.C."/>
            <person name="Madupu R."/>
            <person name="Angiuoli S.V."/>
            <person name="Durkin A.S."/>
            <person name="Haft D.H."/>
            <person name="Vamathevan J.J."/>
            <person name="Khouri H."/>
            <person name="Utterback T.R."/>
            <person name="Lee C."/>
            <person name="Dimitrov G."/>
            <person name="Jiang L."/>
            <person name="Qin H."/>
            <person name="Weidman J."/>
            <person name="Tran K."/>
            <person name="Kang K.H."/>
            <person name="Hance I.R."/>
            <person name="Nelson K.E."/>
            <person name="Fraser C.M."/>
        </authorList>
    </citation>
    <scope>NUCLEOTIDE SEQUENCE [LARGE SCALE GENOMIC DNA]</scope>
    <source>
        <strain>COL</strain>
    </source>
</reference>
<keyword id="KW-0963">Cytoplasm</keyword>
<keyword id="KW-0255">Endonuclease</keyword>
<keyword id="KW-0378">Hydrolase</keyword>
<keyword id="KW-0460">Magnesium</keyword>
<keyword id="KW-0479">Metal-binding</keyword>
<keyword id="KW-0540">Nuclease</keyword>
<protein>
    <recommendedName>
        <fullName evidence="1">Ribonuclease HIII</fullName>
        <shortName evidence="1">RNase HIII</shortName>
        <ecNumber evidence="1">3.1.26.4</ecNumber>
    </recommendedName>
</protein>
<feature type="chain" id="PRO_0000111691" description="Ribonuclease HIII">
    <location>
        <begin position="1"/>
        <end position="312"/>
    </location>
</feature>
<feature type="domain" description="RNase H type-2" evidence="2">
    <location>
        <begin position="95"/>
        <end position="311"/>
    </location>
</feature>
<feature type="binding site" evidence="1">
    <location>
        <position position="101"/>
    </location>
    <ligand>
        <name>a divalent metal cation</name>
        <dbReference type="ChEBI" id="CHEBI:60240"/>
    </ligand>
</feature>
<feature type="binding site" evidence="1">
    <location>
        <position position="102"/>
    </location>
    <ligand>
        <name>a divalent metal cation</name>
        <dbReference type="ChEBI" id="CHEBI:60240"/>
    </ligand>
</feature>
<feature type="binding site" evidence="1">
    <location>
        <position position="206"/>
    </location>
    <ligand>
        <name>a divalent metal cation</name>
        <dbReference type="ChEBI" id="CHEBI:60240"/>
    </ligand>
</feature>
<comment type="function">
    <text evidence="1">Endonuclease that specifically degrades the RNA of RNA-DNA hybrids.</text>
</comment>
<comment type="catalytic activity">
    <reaction evidence="1">
        <text>Endonucleolytic cleavage to 5'-phosphomonoester.</text>
        <dbReference type="EC" id="3.1.26.4"/>
    </reaction>
</comment>
<comment type="cofactor">
    <cofactor evidence="1">
        <name>Mn(2+)</name>
        <dbReference type="ChEBI" id="CHEBI:29035"/>
    </cofactor>
    <cofactor evidence="1">
        <name>Mg(2+)</name>
        <dbReference type="ChEBI" id="CHEBI:18420"/>
    </cofactor>
    <text evidence="1">Manganese or magnesium. Binds 1 divalent metal ion per monomer in the absence of substrate. May bind a second metal ion after substrate binding.</text>
</comment>
<comment type="subcellular location">
    <subcellularLocation>
        <location evidence="1">Cytoplasm</location>
    </subcellularLocation>
</comment>
<comment type="similarity">
    <text evidence="1">Belongs to the RNase HII family. RnhC subfamily.</text>
</comment>
<sequence length="312" mass="35055">MANIVFKLSDKDITTLMSRISFDTENLPQGMKARAKYQNTTVNIYQSGKVMFQGNHAEAVSEELLPQHSQLNTNKTKKKNMANSFLEQTLMYDQFNCIGSDEAGSGDYFGPLTVCAAFVTKEHVPILKTLGVDDSKKLTDTKIVELAEQLVTFIPHSLLTLHNEKYNIQQAKGWTQVKMKAALHNEAIKNVLEKIDSSQLDYIVIDQFAKREVYSHYALSDIPLPKKTKFETKGESKSLAIAVASIISRYAFVTYMDQISKNINMTIPKGAGAKVDVIAAKIIKKYGLSRLDTISKKHFKNREKAQKILKPL</sequence>
<evidence type="ECO:0000255" key="1">
    <source>
        <dbReference type="HAMAP-Rule" id="MF_00053"/>
    </source>
</evidence>
<evidence type="ECO:0000255" key="2">
    <source>
        <dbReference type="PROSITE-ProRule" id="PRU01319"/>
    </source>
</evidence>
<gene>
    <name evidence="1" type="primary">rnhC</name>
    <name type="ordered locus">SACOL1150</name>
</gene>
<accession>Q5HGU4</accession>
<organism>
    <name type="scientific">Staphylococcus aureus (strain COL)</name>
    <dbReference type="NCBI Taxonomy" id="93062"/>
    <lineage>
        <taxon>Bacteria</taxon>
        <taxon>Bacillati</taxon>
        <taxon>Bacillota</taxon>
        <taxon>Bacilli</taxon>
        <taxon>Bacillales</taxon>
        <taxon>Staphylococcaceae</taxon>
        <taxon>Staphylococcus</taxon>
    </lineage>
</organism>
<proteinExistence type="inferred from homology"/>
<name>RNH3_STAAC</name>
<dbReference type="EC" id="3.1.26.4" evidence="1"/>
<dbReference type="EMBL" id="CP000046">
    <property type="protein sequence ID" value="AAW38029.1"/>
    <property type="molecule type" value="Genomic_DNA"/>
</dbReference>
<dbReference type="RefSeq" id="WP_001284258.1">
    <property type="nucleotide sequence ID" value="NZ_JBGOFO010000002.1"/>
</dbReference>
<dbReference type="SMR" id="Q5HGU4"/>
<dbReference type="KEGG" id="sac:SACOL1150"/>
<dbReference type="HOGENOM" id="CLU_059546_1_0_9"/>
<dbReference type="Proteomes" id="UP000000530">
    <property type="component" value="Chromosome"/>
</dbReference>
<dbReference type="GO" id="GO:0005737">
    <property type="term" value="C:cytoplasm"/>
    <property type="evidence" value="ECO:0007669"/>
    <property type="project" value="UniProtKB-SubCell"/>
</dbReference>
<dbReference type="GO" id="GO:0032299">
    <property type="term" value="C:ribonuclease H2 complex"/>
    <property type="evidence" value="ECO:0007669"/>
    <property type="project" value="TreeGrafter"/>
</dbReference>
<dbReference type="GO" id="GO:0000287">
    <property type="term" value="F:magnesium ion binding"/>
    <property type="evidence" value="ECO:0007669"/>
    <property type="project" value="UniProtKB-UniRule"/>
</dbReference>
<dbReference type="GO" id="GO:0003723">
    <property type="term" value="F:RNA binding"/>
    <property type="evidence" value="ECO:0007669"/>
    <property type="project" value="InterPro"/>
</dbReference>
<dbReference type="GO" id="GO:0004523">
    <property type="term" value="F:RNA-DNA hybrid ribonuclease activity"/>
    <property type="evidence" value="ECO:0007669"/>
    <property type="project" value="UniProtKB-UniRule"/>
</dbReference>
<dbReference type="GO" id="GO:0043137">
    <property type="term" value="P:DNA replication, removal of RNA primer"/>
    <property type="evidence" value="ECO:0007669"/>
    <property type="project" value="TreeGrafter"/>
</dbReference>
<dbReference type="GO" id="GO:0006298">
    <property type="term" value="P:mismatch repair"/>
    <property type="evidence" value="ECO:0007669"/>
    <property type="project" value="TreeGrafter"/>
</dbReference>
<dbReference type="CDD" id="cd06590">
    <property type="entry name" value="RNase_HII_bacteria_HIII_like"/>
    <property type="match status" value="1"/>
</dbReference>
<dbReference type="CDD" id="cd14796">
    <property type="entry name" value="RNAse_HIII_N"/>
    <property type="match status" value="1"/>
</dbReference>
<dbReference type="FunFam" id="3.30.420.10:FF:000047">
    <property type="entry name" value="Ribonuclease HIII"/>
    <property type="match status" value="1"/>
</dbReference>
<dbReference type="Gene3D" id="3.30.420.10">
    <property type="entry name" value="Ribonuclease H-like superfamily/Ribonuclease H"/>
    <property type="match status" value="1"/>
</dbReference>
<dbReference type="Gene3D" id="3.30.310.10">
    <property type="entry name" value="TATA-Binding Protein"/>
    <property type="match status" value="1"/>
</dbReference>
<dbReference type="HAMAP" id="MF_00053">
    <property type="entry name" value="RNase_HIII"/>
    <property type="match status" value="1"/>
</dbReference>
<dbReference type="InterPro" id="IPR001352">
    <property type="entry name" value="RNase_HII/HIII"/>
</dbReference>
<dbReference type="InterPro" id="IPR024567">
    <property type="entry name" value="RNase_HII/HIII_dom"/>
</dbReference>
<dbReference type="InterPro" id="IPR004641">
    <property type="entry name" value="RNase_HIII"/>
</dbReference>
<dbReference type="InterPro" id="IPR024568">
    <property type="entry name" value="RNase_HIII_N"/>
</dbReference>
<dbReference type="InterPro" id="IPR012337">
    <property type="entry name" value="RNaseH-like_sf"/>
</dbReference>
<dbReference type="InterPro" id="IPR036397">
    <property type="entry name" value="RNaseH_sf"/>
</dbReference>
<dbReference type="InterPro" id="IPR012295">
    <property type="entry name" value="TBP_dom_sf"/>
</dbReference>
<dbReference type="NCBIfam" id="TIGR00716">
    <property type="entry name" value="rnhC"/>
    <property type="match status" value="1"/>
</dbReference>
<dbReference type="PANTHER" id="PTHR10954:SF23">
    <property type="entry name" value="RIBONUCLEASE"/>
    <property type="match status" value="1"/>
</dbReference>
<dbReference type="PANTHER" id="PTHR10954">
    <property type="entry name" value="RIBONUCLEASE H2 SUBUNIT A"/>
    <property type="match status" value="1"/>
</dbReference>
<dbReference type="Pfam" id="PF11858">
    <property type="entry name" value="DUF3378"/>
    <property type="match status" value="1"/>
</dbReference>
<dbReference type="Pfam" id="PF01351">
    <property type="entry name" value="RNase_HII"/>
    <property type="match status" value="1"/>
</dbReference>
<dbReference type="PIRSF" id="PIRSF037748">
    <property type="entry name" value="RnhC"/>
    <property type="match status" value="1"/>
</dbReference>
<dbReference type="SUPFAM" id="SSF53098">
    <property type="entry name" value="Ribonuclease H-like"/>
    <property type="match status" value="1"/>
</dbReference>
<dbReference type="PROSITE" id="PS51975">
    <property type="entry name" value="RNASE_H_2"/>
    <property type="match status" value="1"/>
</dbReference>